<organism>
    <name type="scientific">Debaryomyces hansenii (strain ATCC 36239 / CBS 767 / BCRC 21394 / JCM 1990 / NBRC 0083 / IGC 2968)</name>
    <name type="common">Yeast</name>
    <name type="synonym">Torulaspora hansenii</name>
    <dbReference type="NCBI Taxonomy" id="284592"/>
    <lineage>
        <taxon>Eukaryota</taxon>
        <taxon>Fungi</taxon>
        <taxon>Dikarya</taxon>
        <taxon>Ascomycota</taxon>
        <taxon>Saccharomycotina</taxon>
        <taxon>Pichiomycetes</taxon>
        <taxon>Debaryomycetaceae</taxon>
        <taxon>Debaryomyces</taxon>
    </lineage>
</organism>
<evidence type="ECO:0000250" key="1"/>
<evidence type="ECO:0000256" key="2">
    <source>
        <dbReference type="SAM" id="MobiDB-lite"/>
    </source>
</evidence>
<evidence type="ECO:0000305" key="3"/>
<protein>
    <recommendedName>
        <fullName>Probable nucleolar complex protein 14</fullName>
    </recommendedName>
</protein>
<sequence length="795" mass="91911">MAGSQLKQLKAALKANGLIGQTNIKKKNKKSKTPSETRRNDKQEILSNIRKDFNLFDGKINRTKRDVTMIQGGKFVKVGSKQHSDATRAKSDVENSMKLQYELDKKQHGKTGGLVDRRFGENNRNLTAEEKMLERFTRERQGTSKKKINFALGSDDEQDDEDNDGFVLTHSGKSLSLDNDLDDSKSNTKYYDEDSLMPEEVQPKRKSKQEVMKEVIAKSKFYKHQRQMEFQKAQDEIMNLDDEFGDIMTEFNNNPAKKPQSFSNKTPEEIEYDNKVRELTYDRRSVPADRTKTADELQKEHDTRLQKLEADRLRRMNGDYDDREAEADDLEGFWNGSEDEEEGFAIDNSAEEEGSSSGNEDDMDQSKPSGRTLKKTIIQIPGTHEDFIASLSSVDESNHCNYIKKVIETYQPRLAEGNKERMNVFVGILFKHILHLANDPCPPAENINETMKILKKLSESYNEKLVEVIRVEINDIQERIFNLQPRDLVYFVMVGYLFSTSDHYHLVVTPTLILMNESISSIPYDKKTTVSRIGQGLFIVDILLNYQTFSKRFTPEIVCFLEKAALLLIPEPEKLTNQSLSINKIIKSDTNLRTKGIKPTEDLVKVSELFGNDSQVLKLKLTNKLIDIFARILSIWRDNEVMIEILSSFSNLANHLSIHYNSPKLNQLIEKMSKIQNNLIKERKPLTLQHHKAISIATFAPKFEENFNPDKKSYDVNRERQELNKIKNQIKKERKSTLKDIRKESKFTARQQIADKKDKYDEYHKKMANIVNSISTIEGAEKNTYEREKQRRKNK</sequence>
<proteinExistence type="inferred from homology"/>
<gene>
    <name type="primary">NOP14</name>
    <name type="ordered locus">DEHA2B14190g</name>
</gene>
<feature type="chain" id="PRO_0000137159" description="Probable nucleolar complex protein 14">
    <location>
        <begin position="1"/>
        <end position="795"/>
    </location>
</feature>
<feature type="region of interest" description="Disordered" evidence="2">
    <location>
        <begin position="20"/>
        <end position="42"/>
    </location>
</feature>
<feature type="region of interest" description="Disordered" evidence="2">
    <location>
        <begin position="147"/>
        <end position="209"/>
    </location>
</feature>
<feature type="region of interest" description="Disordered" evidence="2">
    <location>
        <begin position="281"/>
        <end position="310"/>
    </location>
</feature>
<feature type="region of interest" description="Disordered" evidence="2">
    <location>
        <begin position="349"/>
        <end position="370"/>
    </location>
</feature>
<feature type="compositionally biased region" description="Basic and acidic residues" evidence="2">
    <location>
        <begin position="33"/>
        <end position="42"/>
    </location>
</feature>
<feature type="compositionally biased region" description="Acidic residues" evidence="2">
    <location>
        <begin position="154"/>
        <end position="164"/>
    </location>
</feature>
<feature type="compositionally biased region" description="Basic and acidic residues" evidence="2">
    <location>
        <begin position="182"/>
        <end position="192"/>
    </location>
</feature>
<feature type="compositionally biased region" description="Acidic residues" evidence="2">
    <location>
        <begin position="349"/>
        <end position="363"/>
    </location>
</feature>
<accession>Q6BW57</accession>
<name>NOP14_DEBHA</name>
<dbReference type="EMBL" id="CR382134">
    <property type="protein sequence ID" value="CAG85573.2"/>
    <property type="status" value="ALT_INIT"/>
    <property type="molecule type" value="Genomic_DNA"/>
</dbReference>
<dbReference type="RefSeq" id="XP_457562.2">
    <property type="nucleotide sequence ID" value="XM_457562.2"/>
</dbReference>
<dbReference type="SMR" id="Q6BW57"/>
<dbReference type="FunCoup" id="Q6BW57">
    <property type="interactions" value="1203"/>
</dbReference>
<dbReference type="STRING" id="284592.Q6BW57"/>
<dbReference type="GeneID" id="2913525"/>
<dbReference type="KEGG" id="dha:DEHA2B14190g"/>
<dbReference type="eggNOG" id="KOG2147">
    <property type="taxonomic scope" value="Eukaryota"/>
</dbReference>
<dbReference type="HOGENOM" id="CLU_008874_0_0_1"/>
<dbReference type="InParanoid" id="Q6BW57"/>
<dbReference type="OrthoDB" id="441771at2759"/>
<dbReference type="Proteomes" id="UP000000599">
    <property type="component" value="Chromosome B"/>
</dbReference>
<dbReference type="GO" id="GO:0030692">
    <property type="term" value="C:Noc4p-Nop14p complex"/>
    <property type="evidence" value="ECO:0007669"/>
    <property type="project" value="TreeGrafter"/>
</dbReference>
<dbReference type="GO" id="GO:0005730">
    <property type="term" value="C:nucleolus"/>
    <property type="evidence" value="ECO:0000250"/>
    <property type="project" value="UniProtKB"/>
</dbReference>
<dbReference type="GO" id="GO:0032040">
    <property type="term" value="C:small-subunit processome"/>
    <property type="evidence" value="ECO:0007669"/>
    <property type="project" value="InterPro"/>
</dbReference>
<dbReference type="GO" id="GO:0030515">
    <property type="term" value="F:snoRNA binding"/>
    <property type="evidence" value="ECO:0000250"/>
    <property type="project" value="UniProtKB"/>
</dbReference>
<dbReference type="GO" id="GO:0030490">
    <property type="term" value="P:maturation of SSU-rRNA"/>
    <property type="evidence" value="ECO:0007669"/>
    <property type="project" value="TreeGrafter"/>
</dbReference>
<dbReference type="GO" id="GO:0042274">
    <property type="term" value="P:ribosomal small subunit biogenesis"/>
    <property type="evidence" value="ECO:0000250"/>
    <property type="project" value="UniProtKB"/>
</dbReference>
<dbReference type="InterPro" id="IPR016024">
    <property type="entry name" value="ARM-type_fold"/>
</dbReference>
<dbReference type="InterPro" id="IPR007276">
    <property type="entry name" value="Nop14"/>
</dbReference>
<dbReference type="PANTHER" id="PTHR23183">
    <property type="entry name" value="NOP14"/>
    <property type="match status" value="1"/>
</dbReference>
<dbReference type="PANTHER" id="PTHR23183:SF0">
    <property type="entry name" value="NUCLEOLAR PROTEIN 14"/>
    <property type="match status" value="1"/>
</dbReference>
<dbReference type="Pfam" id="PF04147">
    <property type="entry name" value="Nop14"/>
    <property type="match status" value="2"/>
</dbReference>
<dbReference type="SUPFAM" id="SSF48371">
    <property type="entry name" value="ARM repeat"/>
    <property type="match status" value="1"/>
</dbReference>
<reference key="1">
    <citation type="journal article" date="2004" name="Nature">
        <title>Genome evolution in yeasts.</title>
        <authorList>
            <person name="Dujon B."/>
            <person name="Sherman D."/>
            <person name="Fischer G."/>
            <person name="Durrens P."/>
            <person name="Casaregola S."/>
            <person name="Lafontaine I."/>
            <person name="de Montigny J."/>
            <person name="Marck C."/>
            <person name="Neuveglise C."/>
            <person name="Talla E."/>
            <person name="Goffard N."/>
            <person name="Frangeul L."/>
            <person name="Aigle M."/>
            <person name="Anthouard V."/>
            <person name="Babour A."/>
            <person name="Barbe V."/>
            <person name="Barnay S."/>
            <person name="Blanchin S."/>
            <person name="Beckerich J.-M."/>
            <person name="Beyne E."/>
            <person name="Bleykasten C."/>
            <person name="Boisrame A."/>
            <person name="Boyer J."/>
            <person name="Cattolico L."/>
            <person name="Confanioleri F."/>
            <person name="de Daruvar A."/>
            <person name="Despons L."/>
            <person name="Fabre E."/>
            <person name="Fairhead C."/>
            <person name="Ferry-Dumazet H."/>
            <person name="Groppi A."/>
            <person name="Hantraye F."/>
            <person name="Hennequin C."/>
            <person name="Jauniaux N."/>
            <person name="Joyet P."/>
            <person name="Kachouri R."/>
            <person name="Kerrest A."/>
            <person name="Koszul R."/>
            <person name="Lemaire M."/>
            <person name="Lesur I."/>
            <person name="Ma L."/>
            <person name="Muller H."/>
            <person name="Nicaud J.-M."/>
            <person name="Nikolski M."/>
            <person name="Oztas S."/>
            <person name="Ozier-Kalogeropoulos O."/>
            <person name="Pellenz S."/>
            <person name="Potier S."/>
            <person name="Richard G.-F."/>
            <person name="Straub M.-L."/>
            <person name="Suleau A."/>
            <person name="Swennen D."/>
            <person name="Tekaia F."/>
            <person name="Wesolowski-Louvel M."/>
            <person name="Westhof E."/>
            <person name="Wirth B."/>
            <person name="Zeniou-Meyer M."/>
            <person name="Zivanovic Y."/>
            <person name="Bolotin-Fukuhara M."/>
            <person name="Thierry A."/>
            <person name="Bouchier C."/>
            <person name="Caudron B."/>
            <person name="Scarpelli C."/>
            <person name="Gaillardin C."/>
            <person name="Weissenbach J."/>
            <person name="Wincker P."/>
            <person name="Souciet J.-L."/>
        </authorList>
    </citation>
    <scope>NUCLEOTIDE SEQUENCE [LARGE SCALE GENOMIC DNA]</scope>
    <source>
        <strain>ATCC 36239 / CBS 767 / BCRC 21394 / JCM 1990 / NBRC 0083 / IGC 2968</strain>
    </source>
</reference>
<keyword id="KW-0539">Nucleus</keyword>
<keyword id="KW-1185">Reference proteome</keyword>
<keyword id="KW-0690">Ribosome biogenesis</keyword>
<keyword id="KW-0698">rRNA processing</keyword>
<comment type="function">
    <text evidence="1">Involved in nucleolar processing of pre-18S ribosomal RNA. Has a role in the nuclear export of 40S pre-ribosomal subunit to the cytoplasm (By similarity).</text>
</comment>
<comment type="subunit">
    <text evidence="1">Component of the ribosomal small subunit (SSU) processome.</text>
</comment>
<comment type="subcellular location">
    <subcellularLocation>
        <location evidence="1">Nucleus</location>
        <location evidence="1">Nucleolus</location>
    </subcellularLocation>
</comment>
<comment type="similarity">
    <text evidence="3">Belongs to the NOP14 family.</text>
</comment>
<comment type="sequence caution" evidence="3">
    <conflict type="erroneous initiation">
        <sequence resource="EMBL-CDS" id="CAG85573"/>
    </conflict>
</comment>